<name>MUG52_SCHPO</name>
<organism>
    <name type="scientific">Schizosaccharomyces pombe (strain 972 / ATCC 24843)</name>
    <name type="common">Fission yeast</name>
    <dbReference type="NCBI Taxonomy" id="284812"/>
    <lineage>
        <taxon>Eukaryota</taxon>
        <taxon>Fungi</taxon>
        <taxon>Dikarya</taxon>
        <taxon>Ascomycota</taxon>
        <taxon>Taphrinomycotina</taxon>
        <taxon>Schizosaccharomycetes</taxon>
        <taxon>Schizosaccharomycetales</taxon>
        <taxon>Schizosaccharomycetaceae</taxon>
        <taxon>Schizosaccharomyces</taxon>
    </lineage>
</organism>
<proteinExistence type="evidence at protein level"/>
<sequence>MHKISLQFFFVDNYFFFWKQSKYQSIYAIQIRCFFLTVNRTPIPKQTFSLIVFYILIMIIQHLKEIHYLISASAKLLLASNYLLELLISHNIQFSPIRSFFIIMV</sequence>
<evidence type="ECO:0000269" key="1">
    <source>
    </source>
</evidence>
<gene>
    <name type="primary">mug52</name>
    <name type="ORF">SPAC17H9.18c</name>
</gene>
<feature type="chain" id="PRO_0000116691" description="Meiotically up-regulated gene 52 protein">
    <location>
        <begin position="1"/>
        <end position="105"/>
    </location>
</feature>
<dbReference type="EMBL" id="CU329670">
    <property type="protein sequence ID" value="CAB11227.1"/>
    <property type="molecule type" value="Genomic_DNA"/>
</dbReference>
<dbReference type="PIR" id="T37883">
    <property type="entry name" value="T37883"/>
</dbReference>
<dbReference type="RefSeq" id="NP_593587.1">
    <property type="nucleotide sequence ID" value="NM_001019019.1"/>
</dbReference>
<dbReference type="SMR" id="O13815"/>
<dbReference type="STRING" id="284812.O13815"/>
<dbReference type="PaxDb" id="4896-SPAC17H9.18c.1"/>
<dbReference type="EnsemblFungi" id="SPAC17H9.18c.1">
    <property type="protein sequence ID" value="SPAC17H9.18c.1:pep"/>
    <property type="gene ID" value="SPAC17H9.18c"/>
</dbReference>
<dbReference type="KEGG" id="spo:2542377"/>
<dbReference type="PomBase" id="SPAC17H9.18c"/>
<dbReference type="VEuPathDB" id="FungiDB:SPAC17H9.18c"/>
<dbReference type="HOGENOM" id="CLU_2238177_0_0_1"/>
<dbReference type="InParanoid" id="O13815"/>
<dbReference type="PRO" id="PR:O13815"/>
<dbReference type="Proteomes" id="UP000002485">
    <property type="component" value="Chromosome I"/>
</dbReference>
<dbReference type="GO" id="GO:0051321">
    <property type="term" value="P:meiotic cell cycle"/>
    <property type="evidence" value="ECO:0007669"/>
    <property type="project" value="UniProtKB-KW"/>
</dbReference>
<comment type="function">
    <text evidence="1">Has a role in meiosis.</text>
</comment>
<protein>
    <recommendedName>
        <fullName>Meiotically up-regulated gene 52 protein</fullName>
    </recommendedName>
</protein>
<accession>O13815</accession>
<reference key="1">
    <citation type="journal article" date="2002" name="Nature">
        <title>The genome sequence of Schizosaccharomyces pombe.</title>
        <authorList>
            <person name="Wood V."/>
            <person name="Gwilliam R."/>
            <person name="Rajandream M.A."/>
            <person name="Lyne M.H."/>
            <person name="Lyne R."/>
            <person name="Stewart A."/>
            <person name="Sgouros J.G."/>
            <person name="Peat N."/>
            <person name="Hayles J."/>
            <person name="Baker S.G."/>
            <person name="Basham D."/>
            <person name="Bowman S."/>
            <person name="Brooks K."/>
            <person name="Brown D."/>
            <person name="Brown S."/>
            <person name="Chillingworth T."/>
            <person name="Churcher C.M."/>
            <person name="Collins M."/>
            <person name="Connor R."/>
            <person name="Cronin A."/>
            <person name="Davis P."/>
            <person name="Feltwell T."/>
            <person name="Fraser A."/>
            <person name="Gentles S."/>
            <person name="Goble A."/>
            <person name="Hamlin N."/>
            <person name="Harris D.E."/>
            <person name="Hidalgo J."/>
            <person name="Hodgson G."/>
            <person name="Holroyd S."/>
            <person name="Hornsby T."/>
            <person name="Howarth S."/>
            <person name="Huckle E.J."/>
            <person name="Hunt S."/>
            <person name="Jagels K."/>
            <person name="James K.D."/>
            <person name="Jones L."/>
            <person name="Jones M."/>
            <person name="Leather S."/>
            <person name="McDonald S."/>
            <person name="McLean J."/>
            <person name="Mooney P."/>
            <person name="Moule S."/>
            <person name="Mungall K.L."/>
            <person name="Murphy L.D."/>
            <person name="Niblett D."/>
            <person name="Odell C."/>
            <person name="Oliver K."/>
            <person name="O'Neil S."/>
            <person name="Pearson D."/>
            <person name="Quail M.A."/>
            <person name="Rabbinowitsch E."/>
            <person name="Rutherford K.M."/>
            <person name="Rutter S."/>
            <person name="Saunders D."/>
            <person name="Seeger K."/>
            <person name="Sharp S."/>
            <person name="Skelton J."/>
            <person name="Simmonds M.N."/>
            <person name="Squares R."/>
            <person name="Squares S."/>
            <person name="Stevens K."/>
            <person name="Taylor K."/>
            <person name="Taylor R.G."/>
            <person name="Tivey A."/>
            <person name="Walsh S.V."/>
            <person name="Warren T."/>
            <person name="Whitehead S."/>
            <person name="Woodward J.R."/>
            <person name="Volckaert G."/>
            <person name="Aert R."/>
            <person name="Robben J."/>
            <person name="Grymonprez B."/>
            <person name="Weltjens I."/>
            <person name="Vanstreels E."/>
            <person name="Rieger M."/>
            <person name="Schaefer M."/>
            <person name="Mueller-Auer S."/>
            <person name="Gabel C."/>
            <person name="Fuchs M."/>
            <person name="Duesterhoeft A."/>
            <person name="Fritzc C."/>
            <person name="Holzer E."/>
            <person name="Moestl D."/>
            <person name="Hilbert H."/>
            <person name="Borzym K."/>
            <person name="Langer I."/>
            <person name="Beck A."/>
            <person name="Lehrach H."/>
            <person name="Reinhardt R."/>
            <person name="Pohl T.M."/>
            <person name="Eger P."/>
            <person name="Zimmermann W."/>
            <person name="Wedler H."/>
            <person name="Wambutt R."/>
            <person name="Purnelle B."/>
            <person name="Goffeau A."/>
            <person name="Cadieu E."/>
            <person name="Dreano S."/>
            <person name="Gloux S."/>
            <person name="Lelaure V."/>
            <person name="Mottier S."/>
            <person name="Galibert F."/>
            <person name="Aves S.J."/>
            <person name="Xiang Z."/>
            <person name="Hunt C."/>
            <person name="Moore K."/>
            <person name="Hurst S.M."/>
            <person name="Lucas M."/>
            <person name="Rochet M."/>
            <person name="Gaillardin C."/>
            <person name="Tallada V.A."/>
            <person name="Garzon A."/>
            <person name="Thode G."/>
            <person name="Daga R.R."/>
            <person name="Cruzado L."/>
            <person name="Jimenez J."/>
            <person name="Sanchez M."/>
            <person name="del Rey F."/>
            <person name="Benito J."/>
            <person name="Dominguez A."/>
            <person name="Revuelta J.L."/>
            <person name="Moreno S."/>
            <person name="Armstrong J."/>
            <person name="Forsburg S.L."/>
            <person name="Cerutti L."/>
            <person name="Lowe T."/>
            <person name="McCombie W.R."/>
            <person name="Paulsen I."/>
            <person name="Potashkin J."/>
            <person name="Shpakovski G.V."/>
            <person name="Ussery D."/>
            <person name="Barrell B.G."/>
            <person name="Nurse P."/>
        </authorList>
    </citation>
    <scope>NUCLEOTIDE SEQUENCE [LARGE SCALE GENOMIC DNA]</scope>
    <source>
        <strain>972 / ATCC 24843</strain>
    </source>
</reference>
<reference key="2">
    <citation type="journal article" date="2005" name="Curr. Biol.">
        <title>A large-scale screen in S. pombe identifies seven novel genes required for critical meiotic events.</title>
        <authorList>
            <person name="Martin-Castellanos C."/>
            <person name="Blanco M."/>
            <person name="Rozalen A.E."/>
            <person name="Perez-Hidalgo L."/>
            <person name="Garcia A.I."/>
            <person name="Conde F."/>
            <person name="Mata J."/>
            <person name="Ellermeier C."/>
            <person name="Davis L."/>
            <person name="San-Segundo P."/>
            <person name="Smith G.R."/>
            <person name="Moreno S."/>
        </authorList>
    </citation>
    <scope>FUNCTION IN MEIOSIS</scope>
</reference>
<keyword id="KW-0469">Meiosis</keyword>
<keyword id="KW-1185">Reference proteome</keyword>